<reference key="1">
    <citation type="journal article" date="2000" name="Virology">
        <title>The human T-cell leukemia virus type I (HTLV-I) X region encoded protein p13(II) interacts with cellular proteins.</title>
        <authorList>
            <person name="Hou X."/>
            <person name="Foley S."/>
            <person name="Cueto M."/>
            <person name="Robinson M.A."/>
        </authorList>
    </citation>
    <scope>NUCLEOTIDE SEQUENCE [MRNA]</scope>
    <scope>INTERACTION WITH A HTLV-I VIRAL P13 PROTEIN</scope>
    <source>
        <tissue>Lymphocyte</tissue>
    </source>
</reference>
<organism>
    <name type="scientific">Oryctolagus cuniculus</name>
    <name type="common">Rabbit</name>
    <dbReference type="NCBI Taxonomy" id="9986"/>
    <lineage>
        <taxon>Eukaryota</taxon>
        <taxon>Metazoa</taxon>
        <taxon>Chordata</taxon>
        <taxon>Craniata</taxon>
        <taxon>Vertebrata</taxon>
        <taxon>Euteleostomi</taxon>
        <taxon>Mammalia</taxon>
        <taxon>Eutheria</taxon>
        <taxon>Euarchontoglires</taxon>
        <taxon>Glires</taxon>
        <taxon>Lagomorpha</taxon>
        <taxon>Leporidae</taxon>
        <taxon>Oryctolagus</taxon>
    </lineage>
</organism>
<proteinExistence type="evidence at protein level"/>
<keyword id="KW-0007">Acetylation</keyword>
<keyword id="KW-0009">Actin-binding</keyword>
<keyword id="KW-0963">Cytoplasm</keyword>
<keyword id="KW-0206">Cytoskeleton</keyword>
<keyword id="KW-1017">Isopeptide bond</keyword>
<keyword id="KW-0597">Phosphoprotein</keyword>
<keyword id="KW-1185">Reference proteome</keyword>
<keyword id="KW-0677">Repeat</keyword>
<keyword id="KW-0832">Ubl conjugation</keyword>
<name>FLNB_RABIT</name>
<feature type="chain" id="PRO_0000087300" description="Filamin-B">
    <location>
        <begin position="1" status="less than"/>
        <end position="294"/>
    </location>
</feature>
<feature type="repeat" description="Filamin 22">
    <location>
        <begin position="1" status="less than"/>
        <end position="67"/>
    </location>
</feature>
<feature type="repeat" description="Filamin 23">
    <location>
        <begin position="71"/>
        <end position="163"/>
    </location>
</feature>
<feature type="repeat" description="Filamin 24">
    <location>
        <begin position="199"/>
        <end position="293"/>
    </location>
</feature>
<feature type="region of interest" description="Self-association site, tail" evidence="1">
    <location>
        <begin position="164"/>
        <end position="294"/>
    </location>
</feature>
<feature type="region of interest" description="Hinge 2" evidence="1">
    <location>
        <begin position="164"/>
        <end position="198"/>
    </location>
</feature>
<feature type="modified residue" description="Phosphoserine" evidence="2">
    <location>
        <position position="61"/>
    </location>
</feature>
<feature type="modified residue" description="Phosphoserine" evidence="2">
    <location>
        <position position="157"/>
    </location>
</feature>
<feature type="modified residue" description="Phosphoserine" evidence="2">
    <location>
        <position position="173"/>
    </location>
</feature>
<feature type="modified residue" description="Phosphoserine" evidence="2">
    <location>
        <position position="184"/>
    </location>
</feature>
<feature type="modified residue" description="N6-succinyllysine" evidence="3">
    <location>
        <position position="210"/>
    </location>
</feature>
<feature type="modified residue" description="N6-succinyllysine" evidence="3">
    <location>
        <position position="216"/>
    </location>
</feature>
<feature type="modified residue" description="N6-acetyllysine" evidence="2">
    <location>
        <position position="268"/>
    </location>
</feature>
<feature type="cross-link" description="Glycyl lysine isopeptide (Lys-Gly) (interchain with G-Cter in ISG15)" evidence="1">
    <location>
        <position position="160"/>
    </location>
</feature>
<feature type="non-terminal residue">
    <location>
        <position position="1"/>
    </location>
</feature>
<comment type="function">
    <text evidence="1">Connects cell membrane constituents to the actin cytoskeleton. May promote orthogonal branching of actin filaments and links actin filaments to membrane glycoproteins. Anchors various transmembrane proteins to the actin cytoskeleton (By similarity).</text>
</comment>
<comment type="subunit">
    <text evidence="1 3 4">Homodimer. Interacts with FLNA, FLNC, INPPL1, ITGB1A, ITGB1D, ITGB3, ITGB6, MYOT, MYOZ1, PSEN1 and PSEN2. Interacts with MICALL2 (By similarity). Interacts with RFLNA and RFLNB (By similarity). Interacts with HTLV-I viral p13 protein. Interacts with ASB2; the interaction targets FLNB for proteasomal degradation (By similarity).</text>
</comment>
<comment type="subcellular location">
    <subcellularLocation>
        <location evidence="1">Cytoplasm</location>
        <location evidence="1">Cell cortex</location>
    </subcellularLocation>
    <subcellularLocation>
        <location evidence="1">Cytoplasm</location>
        <location evidence="1">Cytoskeleton</location>
    </subcellularLocation>
    <subcellularLocation>
        <location evidence="3">Cytoplasm</location>
        <location evidence="3">Myofibril</location>
        <location evidence="3">Sarcomere</location>
        <location evidence="3">Z line</location>
    </subcellularLocation>
</comment>
<comment type="PTM">
    <text evidence="1">ISGylation prevents ability to interact with the upstream activators of the JNK cascade and inhibits IFNA-induced JNK signaling.</text>
</comment>
<comment type="PTM">
    <text evidence="2">Ubiquitination by a SCF-like complex containing ASB2 leads to proteasomal degradation which promotes muscle differentiation.</text>
</comment>
<comment type="similarity">
    <text evidence="5">Belongs to the filamin family.</text>
</comment>
<protein>
    <recommendedName>
        <fullName>Filamin-B</fullName>
        <shortName>FLN-B</shortName>
    </recommendedName>
    <alternativeName>
        <fullName>ABP-280-like protein</fullName>
    </alternativeName>
    <alternativeName>
        <fullName>Actin-binding-like protein</fullName>
    </alternativeName>
    <alternativeName>
        <fullName>Beta-filamin</fullName>
    </alternativeName>
    <alternativeName>
        <fullName>C254</fullName>
    </alternativeName>
</protein>
<sequence>GTRLNGAKGKIDAKVHSPSGAVEECHVSELEPDKYAVRFIPHENGIHTIDVKFNGSHVVGSPFKVRVGEPGQAGNPALVSAYGAGLEGGTTGIQSEFFINTTRAGPGTLSVTIEGPSKVKMDCQETPEGYKVMYTPMAPGNYLIGVKYGGPNHIVGSPFKAKVTGQRLVGPGSTNETSSILVESVTRSSTETCYSAIPKASSDASKVTSKGAGLSKAFVGQKSSFLVDCSKAGSNMLLIGVHGPTTPCEEVSMKHVGSQQYNVTYVVKERGEYVLAVKWGEEHIPGSPFHVTVP</sequence>
<accession>Q9MZD2</accession>
<gene>
    <name type="primary">FLNB</name>
</gene>
<evidence type="ECO:0000250" key="1"/>
<evidence type="ECO:0000250" key="2">
    <source>
        <dbReference type="UniProtKB" id="O75369"/>
    </source>
</evidence>
<evidence type="ECO:0000250" key="3">
    <source>
        <dbReference type="UniProtKB" id="Q80X90"/>
    </source>
</evidence>
<evidence type="ECO:0000269" key="4">
    <source>
    </source>
</evidence>
<evidence type="ECO:0000305" key="5"/>
<dbReference type="EMBL" id="AF244365">
    <property type="protein sequence ID" value="AAF97050.1"/>
    <property type="molecule type" value="mRNA"/>
</dbReference>
<dbReference type="SMR" id="Q9MZD2"/>
<dbReference type="STRING" id="9986.ENSOCUP00000033274"/>
<dbReference type="PaxDb" id="9986-ENSOCUP00000000722"/>
<dbReference type="eggNOG" id="KOG0518">
    <property type="taxonomic scope" value="Eukaryota"/>
</dbReference>
<dbReference type="InParanoid" id="Q9MZD2"/>
<dbReference type="Proteomes" id="UP000001811">
    <property type="component" value="Unplaced"/>
</dbReference>
<dbReference type="GO" id="GO:0005938">
    <property type="term" value="C:cell cortex"/>
    <property type="evidence" value="ECO:0007669"/>
    <property type="project" value="UniProtKB-SubCell"/>
</dbReference>
<dbReference type="GO" id="GO:0005856">
    <property type="term" value="C:cytoskeleton"/>
    <property type="evidence" value="ECO:0007669"/>
    <property type="project" value="UniProtKB-SubCell"/>
</dbReference>
<dbReference type="GO" id="GO:0030018">
    <property type="term" value="C:Z disc"/>
    <property type="evidence" value="ECO:0007669"/>
    <property type="project" value="UniProtKB-SubCell"/>
</dbReference>
<dbReference type="GO" id="GO:0051015">
    <property type="term" value="F:actin filament binding"/>
    <property type="evidence" value="ECO:0007669"/>
    <property type="project" value="InterPro"/>
</dbReference>
<dbReference type="GO" id="GO:0030036">
    <property type="term" value="P:actin cytoskeleton organization"/>
    <property type="evidence" value="ECO:0007669"/>
    <property type="project" value="InterPro"/>
</dbReference>
<dbReference type="FunFam" id="2.60.40.10:FF:000092">
    <property type="entry name" value="Filamin-B isoform B"/>
    <property type="match status" value="1"/>
</dbReference>
<dbReference type="FunFam" id="2.60.40.10:FF:000102">
    <property type="entry name" value="filamin-B isoform X2"/>
    <property type="match status" value="1"/>
</dbReference>
<dbReference type="FunFam" id="2.60.40.10:FF:000096">
    <property type="entry name" value="filamin-C isoform X2"/>
    <property type="match status" value="1"/>
</dbReference>
<dbReference type="Gene3D" id="2.60.40.10">
    <property type="entry name" value="Immunoglobulins"/>
    <property type="match status" value="3"/>
</dbReference>
<dbReference type="InterPro" id="IPR044801">
    <property type="entry name" value="Filamin"/>
</dbReference>
<dbReference type="InterPro" id="IPR017868">
    <property type="entry name" value="Filamin/ABP280_repeat-like"/>
</dbReference>
<dbReference type="InterPro" id="IPR001298">
    <property type="entry name" value="Filamin/ABP280_rpt"/>
</dbReference>
<dbReference type="InterPro" id="IPR013783">
    <property type="entry name" value="Ig-like_fold"/>
</dbReference>
<dbReference type="InterPro" id="IPR014756">
    <property type="entry name" value="Ig_E-set"/>
</dbReference>
<dbReference type="PANTHER" id="PTHR38537:SF7">
    <property type="entry name" value="FILAMIN-B"/>
    <property type="match status" value="1"/>
</dbReference>
<dbReference type="PANTHER" id="PTHR38537">
    <property type="entry name" value="JITTERBUG, ISOFORM N"/>
    <property type="match status" value="1"/>
</dbReference>
<dbReference type="Pfam" id="PF00630">
    <property type="entry name" value="Filamin"/>
    <property type="match status" value="3"/>
</dbReference>
<dbReference type="SMART" id="SM00557">
    <property type="entry name" value="IG_FLMN"/>
    <property type="match status" value="3"/>
</dbReference>
<dbReference type="SUPFAM" id="SSF81296">
    <property type="entry name" value="E set domains"/>
    <property type="match status" value="3"/>
</dbReference>
<dbReference type="PROSITE" id="PS50194">
    <property type="entry name" value="FILAMIN_REPEAT"/>
    <property type="match status" value="3"/>
</dbReference>